<protein>
    <recommendedName>
        <fullName>Autophagy-related protein 29</fullName>
    </recommendedName>
</protein>
<gene>
    <name type="primary">atg29</name>
    <name type="ORF">Pc20g02170</name>
</gene>
<comment type="function">
    <text evidence="1 3">Plays a role in autophagy. Functions at the preautophagosomal structure (PAS) in order to form normal autophagosomes under starvation conditions. Also plays a role in mitophagy and regulation of filamentous growth (By similarity).</text>
</comment>
<comment type="subcellular location">
    <subcellularLocation>
        <location evidence="1">Preautophagosomal structure</location>
    </subcellularLocation>
    <text evidence="1">Also localizes to other perivacuolar punctate structures.</text>
</comment>
<comment type="similarity">
    <text evidence="4">Belongs to the ATG29 family.</text>
</comment>
<sequence length="412" mass="45151">MSIKVDPVDTNFTVFIRLPFPRGDFVDPPPVEWNASKDQALWDILSRPSKGDIDWKALAENFDVTLQFLLQQAAWLYDRQLSQVRAQMRKVNTTQSTSPSPALGSVSGSAALSGQPQRETLATGSRAPSRQVSQQKDIPLRAPENRRTSFTSTTATNLTPGSRDPTRTGTPTIEDKEPRWDSFGRRPSAVRREQPPVASLPRSPPLEEEPLSSSSPEESGSDEEDTTRRAPLFKRFGKFSTQRSGLRDDEDNEEDTPAFLPLAREHEHTHHERPVQELSTTLRLDAERAAAQRRHPEQRAGPRAPVPTDSSTSSMSSGGRSSLPDGARPTSQGAPVLSPQSAAERQNSRKSTASGREASDGTPSMGSSFSDLDDASVTQSALEEALLSNMQHGGMASRMSTISHALRSRYLQ</sequence>
<organism>
    <name type="scientific">Penicillium rubens (strain ATCC 28089 / DSM 1075 / NRRL 1951 / Wisconsin 54-1255)</name>
    <name type="common">Penicillium chrysogenum</name>
    <dbReference type="NCBI Taxonomy" id="500485"/>
    <lineage>
        <taxon>Eukaryota</taxon>
        <taxon>Fungi</taxon>
        <taxon>Dikarya</taxon>
        <taxon>Ascomycota</taxon>
        <taxon>Pezizomycotina</taxon>
        <taxon>Eurotiomycetes</taxon>
        <taxon>Eurotiomycetidae</taxon>
        <taxon>Eurotiales</taxon>
        <taxon>Aspergillaceae</taxon>
        <taxon>Penicillium</taxon>
        <taxon>Penicillium chrysogenum species complex</taxon>
    </lineage>
</organism>
<feature type="chain" id="PRO_0000318059" description="Autophagy-related protein 29">
    <location>
        <begin position="1"/>
        <end position="412"/>
    </location>
</feature>
<feature type="region of interest" description="Disordered" evidence="2">
    <location>
        <begin position="92"/>
        <end position="379"/>
    </location>
</feature>
<feature type="compositionally biased region" description="Low complexity" evidence="2">
    <location>
        <begin position="98"/>
        <end position="114"/>
    </location>
</feature>
<feature type="compositionally biased region" description="Polar residues" evidence="2">
    <location>
        <begin position="115"/>
        <end position="136"/>
    </location>
</feature>
<feature type="compositionally biased region" description="Low complexity" evidence="2">
    <location>
        <begin position="148"/>
        <end position="159"/>
    </location>
</feature>
<feature type="compositionally biased region" description="Basic and acidic residues" evidence="2">
    <location>
        <begin position="173"/>
        <end position="194"/>
    </location>
</feature>
<feature type="compositionally biased region" description="Basic and acidic residues" evidence="2">
    <location>
        <begin position="263"/>
        <end position="275"/>
    </location>
</feature>
<feature type="compositionally biased region" description="Basic and acidic residues" evidence="2">
    <location>
        <begin position="284"/>
        <end position="300"/>
    </location>
</feature>
<feature type="compositionally biased region" description="Low complexity" evidence="2">
    <location>
        <begin position="310"/>
        <end position="322"/>
    </location>
</feature>
<feature type="compositionally biased region" description="Polar residues" evidence="2">
    <location>
        <begin position="329"/>
        <end position="354"/>
    </location>
</feature>
<feature type="compositionally biased region" description="Polar residues" evidence="2">
    <location>
        <begin position="361"/>
        <end position="379"/>
    </location>
</feature>
<dbReference type="EMBL" id="EF110903">
    <property type="protein sequence ID" value="ABO31324.1"/>
    <property type="molecule type" value="Genomic_DNA"/>
</dbReference>
<dbReference type="EMBL" id="AM920435">
    <property type="status" value="NOT_ANNOTATED_CDS"/>
    <property type="molecule type" value="Genomic_DNA"/>
</dbReference>
<dbReference type="SMR" id="A7KAN7"/>
<dbReference type="STRING" id="500485.A7KAN7"/>
<dbReference type="Proteomes" id="UP000000724">
    <property type="component" value="Contig Pc00c20"/>
</dbReference>
<dbReference type="GO" id="GO:0000407">
    <property type="term" value="C:phagophore assembly site"/>
    <property type="evidence" value="ECO:0007669"/>
    <property type="project" value="UniProtKB-SubCell"/>
</dbReference>
<dbReference type="GO" id="GO:0000045">
    <property type="term" value="P:autophagosome assembly"/>
    <property type="evidence" value="ECO:0007669"/>
    <property type="project" value="InterPro"/>
</dbReference>
<dbReference type="GO" id="GO:0015031">
    <property type="term" value="P:protein transport"/>
    <property type="evidence" value="ECO:0007669"/>
    <property type="project" value="UniProtKB-KW"/>
</dbReference>
<dbReference type="FunFam" id="1.10.10.2570:FF:000001">
    <property type="entry name" value="Autophagy-related protein 29"/>
    <property type="match status" value="1"/>
</dbReference>
<dbReference type="Gene3D" id="1.10.10.2570">
    <property type="match status" value="1"/>
</dbReference>
<dbReference type="InterPro" id="IPR039113">
    <property type="entry name" value="ATG29"/>
</dbReference>
<dbReference type="InterPro" id="IPR040666">
    <property type="entry name" value="Atg29_N"/>
</dbReference>
<dbReference type="InterPro" id="IPR039362">
    <property type="entry name" value="ATG29_sf"/>
</dbReference>
<dbReference type="PANTHER" id="PTHR40012">
    <property type="entry name" value="AUTOPHAGY-RELATED PROTEIN 29"/>
    <property type="match status" value="1"/>
</dbReference>
<dbReference type="PANTHER" id="PTHR40012:SF1">
    <property type="entry name" value="AUTOPHAGY-RELATED PROTEIN 29"/>
    <property type="match status" value="1"/>
</dbReference>
<dbReference type="Pfam" id="PF18388">
    <property type="entry name" value="ATG29_N"/>
    <property type="match status" value="1"/>
</dbReference>
<proteinExistence type="inferred from homology"/>
<accession>A7KAN7</accession>
<name>ATG29_PENRW</name>
<reference key="1">
    <citation type="journal article" date="2007" name="Autophagy">
        <title>ATG genes involved in non-selective autophagy are conserved from yeast to man, but the selective Cvt and pexophagy pathways also require organism-specific genes.</title>
        <authorList>
            <person name="Meijer W.H."/>
            <person name="van der Klei I.J."/>
            <person name="Veenhuis M."/>
            <person name="Kiel J.A.K.W."/>
        </authorList>
    </citation>
    <scope>NUCLEOTIDE SEQUENCE [GENOMIC DNA]</scope>
    <scope>FUNCTION</scope>
</reference>
<reference key="2">
    <citation type="journal article" date="2008" name="Nat. Biotechnol.">
        <title>Genome sequencing and analysis of the filamentous fungus Penicillium chrysogenum.</title>
        <authorList>
            <person name="van den Berg M.A."/>
            <person name="Albang R."/>
            <person name="Albermann K."/>
            <person name="Badger J.H."/>
            <person name="Daran J.-M."/>
            <person name="Driessen A.J.M."/>
            <person name="Garcia-Estrada C."/>
            <person name="Fedorova N.D."/>
            <person name="Harris D.M."/>
            <person name="Heijne W.H.M."/>
            <person name="Joardar V.S."/>
            <person name="Kiel J.A.K.W."/>
            <person name="Kovalchuk A."/>
            <person name="Martin J.F."/>
            <person name="Nierman W.C."/>
            <person name="Nijland J.G."/>
            <person name="Pronk J.T."/>
            <person name="Roubos J.A."/>
            <person name="van der Klei I.J."/>
            <person name="van Peij N.N.M.E."/>
            <person name="Veenhuis M."/>
            <person name="von Doehren H."/>
            <person name="Wagner C."/>
            <person name="Wortman J.R."/>
            <person name="Bovenberg R.A.L."/>
        </authorList>
    </citation>
    <scope>NUCLEOTIDE SEQUENCE [LARGE SCALE GENOMIC DNA]</scope>
    <source>
        <strain>ATCC 28089 / DSM 1075 / NRRL 1951 / Wisconsin 54-1255</strain>
    </source>
</reference>
<evidence type="ECO:0000250" key="1"/>
<evidence type="ECO:0000256" key="2">
    <source>
        <dbReference type="SAM" id="MobiDB-lite"/>
    </source>
</evidence>
<evidence type="ECO:0000269" key="3">
    <source>
    </source>
</evidence>
<evidence type="ECO:0000305" key="4"/>
<keyword id="KW-0072">Autophagy</keyword>
<keyword id="KW-0653">Protein transport</keyword>
<keyword id="KW-1185">Reference proteome</keyword>
<keyword id="KW-0813">Transport</keyword>